<dbReference type="EC" id="5.4.2.11" evidence="1"/>
<dbReference type="EMBL" id="CP001001">
    <property type="protein sequence ID" value="ACB22142.1"/>
    <property type="molecule type" value="Genomic_DNA"/>
</dbReference>
<dbReference type="RefSeq" id="WP_012317141.1">
    <property type="nucleotide sequence ID" value="NC_010505.1"/>
</dbReference>
<dbReference type="SMR" id="B1M6A7"/>
<dbReference type="STRING" id="426355.Mrad2831_0115"/>
<dbReference type="GeneID" id="6136415"/>
<dbReference type="KEGG" id="mrd:Mrad2831_0115"/>
<dbReference type="eggNOG" id="COG0588">
    <property type="taxonomic scope" value="Bacteria"/>
</dbReference>
<dbReference type="HOGENOM" id="CLU_033323_1_4_5"/>
<dbReference type="OrthoDB" id="9781415at2"/>
<dbReference type="UniPathway" id="UPA00109">
    <property type="reaction ID" value="UER00186"/>
</dbReference>
<dbReference type="Proteomes" id="UP000006589">
    <property type="component" value="Chromosome"/>
</dbReference>
<dbReference type="GO" id="GO:0004619">
    <property type="term" value="F:phosphoglycerate mutase activity"/>
    <property type="evidence" value="ECO:0007669"/>
    <property type="project" value="UniProtKB-EC"/>
</dbReference>
<dbReference type="GO" id="GO:0006094">
    <property type="term" value="P:gluconeogenesis"/>
    <property type="evidence" value="ECO:0007669"/>
    <property type="project" value="UniProtKB-UniRule"/>
</dbReference>
<dbReference type="GO" id="GO:0006096">
    <property type="term" value="P:glycolytic process"/>
    <property type="evidence" value="ECO:0007669"/>
    <property type="project" value="UniProtKB-UniRule"/>
</dbReference>
<dbReference type="CDD" id="cd07067">
    <property type="entry name" value="HP_PGM_like"/>
    <property type="match status" value="1"/>
</dbReference>
<dbReference type="Gene3D" id="3.40.50.1240">
    <property type="entry name" value="Phosphoglycerate mutase-like"/>
    <property type="match status" value="1"/>
</dbReference>
<dbReference type="HAMAP" id="MF_01039">
    <property type="entry name" value="PGAM_GpmA"/>
    <property type="match status" value="1"/>
</dbReference>
<dbReference type="InterPro" id="IPR013078">
    <property type="entry name" value="His_Pase_superF_clade-1"/>
</dbReference>
<dbReference type="InterPro" id="IPR029033">
    <property type="entry name" value="His_PPase_superfam"/>
</dbReference>
<dbReference type="InterPro" id="IPR001345">
    <property type="entry name" value="PG/BPGM_mutase_AS"/>
</dbReference>
<dbReference type="InterPro" id="IPR005952">
    <property type="entry name" value="Phosphogly_mut1"/>
</dbReference>
<dbReference type="NCBIfam" id="TIGR01258">
    <property type="entry name" value="pgm_1"/>
    <property type="match status" value="2"/>
</dbReference>
<dbReference type="NCBIfam" id="NF002339">
    <property type="entry name" value="PRK01295.1"/>
    <property type="match status" value="1"/>
</dbReference>
<dbReference type="PANTHER" id="PTHR11931">
    <property type="entry name" value="PHOSPHOGLYCERATE MUTASE"/>
    <property type="match status" value="1"/>
</dbReference>
<dbReference type="Pfam" id="PF00300">
    <property type="entry name" value="His_Phos_1"/>
    <property type="match status" value="1"/>
</dbReference>
<dbReference type="PIRSF" id="PIRSF000709">
    <property type="entry name" value="6PFK_2-Ptase"/>
    <property type="match status" value="1"/>
</dbReference>
<dbReference type="SMART" id="SM00855">
    <property type="entry name" value="PGAM"/>
    <property type="match status" value="1"/>
</dbReference>
<dbReference type="SUPFAM" id="SSF53254">
    <property type="entry name" value="Phosphoglycerate mutase-like"/>
    <property type="match status" value="1"/>
</dbReference>
<dbReference type="PROSITE" id="PS00175">
    <property type="entry name" value="PG_MUTASE"/>
    <property type="match status" value="1"/>
</dbReference>
<comment type="function">
    <text evidence="1">Catalyzes the interconversion of 2-phosphoglycerate and 3-phosphoglycerate.</text>
</comment>
<comment type="catalytic activity">
    <reaction evidence="1">
        <text>(2R)-2-phosphoglycerate = (2R)-3-phosphoglycerate</text>
        <dbReference type="Rhea" id="RHEA:15901"/>
        <dbReference type="ChEBI" id="CHEBI:58272"/>
        <dbReference type="ChEBI" id="CHEBI:58289"/>
        <dbReference type="EC" id="5.4.2.11"/>
    </reaction>
</comment>
<comment type="pathway">
    <text evidence="1">Carbohydrate degradation; glycolysis; pyruvate from D-glyceraldehyde 3-phosphate: step 3/5.</text>
</comment>
<comment type="subunit">
    <text evidence="1">Homodimer.</text>
</comment>
<comment type="similarity">
    <text evidence="1">Belongs to the phosphoglycerate mutase family. BPG-dependent PGAM subfamily.</text>
</comment>
<protein>
    <recommendedName>
        <fullName evidence="1">2,3-bisphosphoglycerate-dependent phosphoglycerate mutase</fullName>
        <shortName evidence="1">BPG-dependent PGAM</shortName>
        <shortName evidence="1">PGAM</shortName>
        <shortName evidence="1">Phosphoglyceromutase</shortName>
        <shortName evidence="1">dPGM</shortName>
        <ecNumber evidence="1">5.4.2.11</ecNumber>
    </recommendedName>
</protein>
<organism>
    <name type="scientific">Methylobacterium radiotolerans (strain ATCC 27329 / DSM 1819 / JCM 2831 / NBRC 15690 / NCIMB 10815 / 0-1)</name>
    <dbReference type="NCBI Taxonomy" id="426355"/>
    <lineage>
        <taxon>Bacteria</taxon>
        <taxon>Pseudomonadati</taxon>
        <taxon>Pseudomonadota</taxon>
        <taxon>Alphaproteobacteria</taxon>
        <taxon>Hyphomicrobiales</taxon>
        <taxon>Methylobacteriaceae</taxon>
        <taxon>Methylobacterium</taxon>
    </lineage>
</organism>
<proteinExistence type="inferred from homology"/>
<sequence length="212" mass="23445">MERLLVLVRHGQSEWNLRNLFTGWRDPDLTERGVAEARAAGRGLKRDGYGFDVAFTSALIRAQRTCALVLEEMGLSEIPILRERALNERDYGDLSGLNKDEARARWGDAQVHAWRRGYDVRPPGGESLKDTAARVLPCYVATILPRVMAGQRVLVAAHGNSLRALVMVLDGLTEAQVPDLQIRTGVPLVYRLNADTTVASKTVLDQDVDAGR</sequence>
<accession>B1M6A7</accession>
<gene>
    <name evidence="1" type="primary">gpmA</name>
    <name type="ordered locus">Mrad2831_0115</name>
</gene>
<feature type="chain" id="PRO_1000149520" description="2,3-bisphosphoglycerate-dependent phosphoglycerate mutase">
    <location>
        <begin position="1"/>
        <end position="212"/>
    </location>
</feature>
<feature type="active site" description="Tele-phosphohistidine intermediate" evidence="1">
    <location>
        <position position="10"/>
    </location>
</feature>
<feature type="active site" description="Proton donor/acceptor" evidence="1">
    <location>
        <position position="88"/>
    </location>
</feature>
<feature type="binding site" evidence="1">
    <location>
        <begin position="9"/>
        <end position="16"/>
    </location>
    <ligand>
        <name>substrate</name>
    </ligand>
</feature>
<feature type="binding site" evidence="1">
    <location>
        <begin position="22"/>
        <end position="23"/>
    </location>
    <ligand>
        <name>substrate</name>
    </ligand>
</feature>
<feature type="binding site" evidence="1">
    <location>
        <position position="61"/>
    </location>
    <ligand>
        <name>substrate</name>
    </ligand>
</feature>
<feature type="binding site" evidence="1">
    <location>
        <begin position="88"/>
        <end position="91"/>
    </location>
    <ligand>
        <name>substrate</name>
    </ligand>
</feature>
<feature type="binding site" evidence="1">
    <location>
        <position position="99"/>
    </location>
    <ligand>
        <name>substrate</name>
    </ligand>
</feature>
<feature type="binding site" evidence="1">
    <location>
        <begin position="115"/>
        <end position="116"/>
    </location>
    <ligand>
        <name>substrate</name>
    </ligand>
</feature>
<feature type="binding site" evidence="1">
    <location>
        <begin position="159"/>
        <end position="160"/>
    </location>
    <ligand>
        <name>substrate</name>
    </ligand>
</feature>
<feature type="site" description="Transition state stabilizer" evidence="1">
    <location>
        <position position="158"/>
    </location>
</feature>
<name>GPMA_METRJ</name>
<evidence type="ECO:0000255" key="1">
    <source>
        <dbReference type="HAMAP-Rule" id="MF_01039"/>
    </source>
</evidence>
<keyword id="KW-0312">Gluconeogenesis</keyword>
<keyword id="KW-0324">Glycolysis</keyword>
<keyword id="KW-0413">Isomerase</keyword>
<reference key="1">
    <citation type="submission" date="2008-03" db="EMBL/GenBank/DDBJ databases">
        <title>Complete sequence of chromosome of Methylobacterium radiotolerans JCM 2831.</title>
        <authorList>
            <consortium name="US DOE Joint Genome Institute"/>
            <person name="Copeland A."/>
            <person name="Lucas S."/>
            <person name="Lapidus A."/>
            <person name="Glavina del Rio T."/>
            <person name="Dalin E."/>
            <person name="Tice H."/>
            <person name="Bruce D."/>
            <person name="Goodwin L."/>
            <person name="Pitluck S."/>
            <person name="Kiss H."/>
            <person name="Brettin T."/>
            <person name="Detter J.C."/>
            <person name="Han C."/>
            <person name="Kuske C.R."/>
            <person name="Schmutz J."/>
            <person name="Larimer F."/>
            <person name="Land M."/>
            <person name="Hauser L."/>
            <person name="Kyrpides N."/>
            <person name="Mikhailova N."/>
            <person name="Marx C.J."/>
            <person name="Richardson P."/>
        </authorList>
    </citation>
    <scope>NUCLEOTIDE SEQUENCE [LARGE SCALE GENOMIC DNA]</scope>
    <source>
        <strain>ATCC 27329 / DSM 1819 / JCM 2831 / NBRC 15690 / NCIMB 10815 / 0-1</strain>
    </source>
</reference>